<feature type="chain" id="PRO_0000170366" description="Nucleoid-associated protein BB1439">
    <location>
        <begin position="1"/>
        <end position="108"/>
    </location>
</feature>
<feature type="region of interest" description="Disordered" evidence="2">
    <location>
        <begin position="86"/>
        <end position="108"/>
    </location>
</feature>
<feature type="compositionally biased region" description="Pro residues" evidence="2">
    <location>
        <begin position="99"/>
        <end position="108"/>
    </location>
</feature>
<organism>
    <name type="scientific">Bordetella bronchiseptica (strain ATCC BAA-588 / NCTC 13252 / RB50)</name>
    <name type="common">Alcaligenes bronchisepticus</name>
    <dbReference type="NCBI Taxonomy" id="257310"/>
    <lineage>
        <taxon>Bacteria</taxon>
        <taxon>Pseudomonadati</taxon>
        <taxon>Pseudomonadota</taxon>
        <taxon>Betaproteobacteria</taxon>
        <taxon>Burkholderiales</taxon>
        <taxon>Alcaligenaceae</taxon>
        <taxon>Bordetella</taxon>
    </lineage>
</organism>
<proteinExistence type="inferred from homology"/>
<name>Y1439_BORBR</name>
<keyword id="KW-0963">Cytoplasm</keyword>
<keyword id="KW-0238">DNA-binding</keyword>
<gene>
    <name type="ordered locus">BB1439</name>
</gene>
<comment type="function">
    <text evidence="1">Binds to DNA and alters its conformation. May be involved in regulation of gene expression, nucleoid organization and DNA protection.</text>
</comment>
<comment type="subunit">
    <text evidence="1">Homodimer.</text>
</comment>
<comment type="subcellular location">
    <subcellularLocation>
        <location evidence="1">Cytoplasm</location>
        <location evidence="1">Nucleoid</location>
    </subcellularLocation>
</comment>
<comment type="similarity">
    <text evidence="1">Belongs to the YbaB/EbfC family.</text>
</comment>
<dbReference type="EMBL" id="BX640441">
    <property type="protein sequence ID" value="CAE31937.1"/>
    <property type="molecule type" value="Genomic_DNA"/>
</dbReference>
<dbReference type="RefSeq" id="WP_003809572.1">
    <property type="nucleotide sequence ID" value="NC_002927.3"/>
</dbReference>
<dbReference type="SMR" id="Q7WMF2"/>
<dbReference type="KEGG" id="bbr:BB1439"/>
<dbReference type="eggNOG" id="COG0718">
    <property type="taxonomic scope" value="Bacteria"/>
</dbReference>
<dbReference type="HOGENOM" id="CLU_140930_0_0_4"/>
<dbReference type="Proteomes" id="UP000001027">
    <property type="component" value="Chromosome"/>
</dbReference>
<dbReference type="GO" id="GO:0043590">
    <property type="term" value="C:bacterial nucleoid"/>
    <property type="evidence" value="ECO:0007669"/>
    <property type="project" value="UniProtKB-UniRule"/>
</dbReference>
<dbReference type="GO" id="GO:0005829">
    <property type="term" value="C:cytosol"/>
    <property type="evidence" value="ECO:0007669"/>
    <property type="project" value="TreeGrafter"/>
</dbReference>
<dbReference type="GO" id="GO:0003677">
    <property type="term" value="F:DNA binding"/>
    <property type="evidence" value="ECO:0007669"/>
    <property type="project" value="UniProtKB-UniRule"/>
</dbReference>
<dbReference type="FunFam" id="3.30.1310.10:FF:000001">
    <property type="entry name" value="Nucleoid-associated protein YbaB"/>
    <property type="match status" value="1"/>
</dbReference>
<dbReference type="Gene3D" id="3.30.1310.10">
    <property type="entry name" value="Nucleoid-associated protein YbaB-like domain"/>
    <property type="match status" value="1"/>
</dbReference>
<dbReference type="HAMAP" id="MF_00274">
    <property type="entry name" value="DNA_YbaB_EbfC"/>
    <property type="match status" value="1"/>
</dbReference>
<dbReference type="InterPro" id="IPR036894">
    <property type="entry name" value="YbaB-like_sf"/>
</dbReference>
<dbReference type="InterPro" id="IPR004401">
    <property type="entry name" value="YbaB/EbfC"/>
</dbReference>
<dbReference type="NCBIfam" id="TIGR00103">
    <property type="entry name" value="DNA_YbaB_EbfC"/>
    <property type="match status" value="1"/>
</dbReference>
<dbReference type="PANTHER" id="PTHR33449">
    <property type="entry name" value="NUCLEOID-ASSOCIATED PROTEIN YBAB"/>
    <property type="match status" value="1"/>
</dbReference>
<dbReference type="PANTHER" id="PTHR33449:SF1">
    <property type="entry name" value="NUCLEOID-ASSOCIATED PROTEIN YBAB"/>
    <property type="match status" value="1"/>
</dbReference>
<dbReference type="Pfam" id="PF02575">
    <property type="entry name" value="YbaB_DNA_bd"/>
    <property type="match status" value="1"/>
</dbReference>
<dbReference type="PIRSF" id="PIRSF004555">
    <property type="entry name" value="UCP004555"/>
    <property type="match status" value="1"/>
</dbReference>
<dbReference type="SUPFAM" id="SSF82607">
    <property type="entry name" value="YbaB-like"/>
    <property type="match status" value="1"/>
</dbReference>
<evidence type="ECO:0000255" key="1">
    <source>
        <dbReference type="HAMAP-Rule" id="MF_00274"/>
    </source>
</evidence>
<evidence type="ECO:0000256" key="2">
    <source>
        <dbReference type="SAM" id="MobiDB-lite"/>
    </source>
</evidence>
<reference key="1">
    <citation type="journal article" date="2003" name="Nat. Genet.">
        <title>Comparative analysis of the genome sequences of Bordetella pertussis, Bordetella parapertussis and Bordetella bronchiseptica.</title>
        <authorList>
            <person name="Parkhill J."/>
            <person name="Sebaihia M."/>
            <person name="Preston A."/>
            <person name="Murphy L.D."/>
            <person name="Thomson N.R."/>
            <person name="Harris D.E."/>
            <person name="Holden M.T.G."/>
            <person name="Churcher C.M."/>
            <person name="Bentley S.D."/>
            <person name="Mungall K.L."/>
            <person name="Cerdeno-Tarraga A.-M."/>
            <person name="Temple L."/>
            <person name="James K.D."/>
            <person name="Harris B."/>
            <person name="Quail M.A."/>
            <person name="Achtman M."/>
            <person name="Atkin R."/>
            <person name="Baker S."/>
            <person name="Basham D."/>
            <person name="Bason N."/>
            <person name="Cherevach I."/>
            <person name="Chillingworth T."/>
            <person name="Collins M."/>
            <person name="Cronin A."/>
            <person name="Davis P."/>
            <person name="Doggett J."/>
            <person name="Feltwell T."/>
            <person name="Goble A."/>
            <person name="Hamlin N."/>
            <person name="Hauser H."/>
            <person name="Holroyd S."/>
            <person name="Jagels K."/>
            <person name="Leather S."/>
            <person name="Moule S."/>
            <person name="Norberczak H."/>
            <person name="O'Neil S."/>
            <person name="Ormond D."/>
            <person name="Price C."/>
            <person name="Rabbinowitsch E."/>
            <person name="Rutter S."/>
            <person name="Sanders M."/>
            <person name="Saunders D."/>
            <person name="Seeger K."/>
            <person name="Sharp S."/>
            <person name="Simmonds M."/>
            <person name="Skelton J."/>
            <person name="Squares R."/>
            <person name="Squares S."/>
            <person name="Stevens K."/>
            <person name="Unwin L."/>
            <person name="Whitehead S."/>
            <person name="Barrell B.G."/>
            <person name="Maskell D.J."/>
        </authorList>
    </citation>
    <scope>NUCLEOTIDE SEQUENCE [LARGE SCALE GENOMIC DNA]</scope>
    <source>
        <strain>ATCC BAA-588 / NCTC 13252 / RB50</strain>
    </source>
</reference>
<accession>Q7WMF2</accession>
<sequence>MMKGQLAGLMRQAQQMQENMKKAQDALAEIQVEGAAGGGLVKVTMTCRHDVKRVAIDPSLLGEDKDMLEDLVAAAFNDALRKAEATSQEKMASVTAGMPLPPGMKLPF</sequence>
<protein>
    <recommendedName>
        <fullName evidence="1">Nucleoid-associated protein BB1439</fullName>
    </recommendedName>
</protein>